<feature type="chain" id="PRO_0000298334" description="Disulfide bond formation protein B">
    <location>
        <begin position="1"/>
        <end position="173"/>
    </location>
</feature>
<feature type="topological domain" description="Cytoplasmic" evidence="1">
    <location>
        <begin position="1"/>
        <end position="14"/>
    </location>
</feature>
<feature type="transmembrane region" description="Helical" evidence="1">
    <location>
        <begin position="15"/>
        <end position="31"/>
    </location>
</feature>
<feature type="topological domain" description="Periplasmic" evidence="1">
    <location>
        <begin position="32"/>
        <end position="49"/>
    </location>
</feature>
<feature type="transmembrane region" description="Helical" evidence="1">
    <location>
        <begin position="50"/>
        <end position="65"/>
    </location>
</feature>
<feature type="topological domain" description="Cytoplasmic" evidence="1">
    <location>
        <begin position="66"/>
        <end position="72"/>
    </location>
</feature>
<feature type="transmembrane region" description="Helical" evidence="1">
    <location>
        <begin position="73"/>
        <end position="90"/>
    </location>
</feature>
<feature type="topological domain" description="Periplasmic" evidence="1">
    <location>
        <begin position="91"/>
        <end position="145"/>
    </location>
</feature>
<feature type="transmembrane region" description="Helical" evidence="1">
    <location>
        <begin position="146"/>
        <end position="164"/>
    </location>
</feature>
<feature type="topological domain" description="Cytoplasmic" evidence="1">
    <location>
        <begin position="165"/>
        <end position="173"/>
    </location>
</feature>
<feature type="disulfide bond" description="Redox-active" evidence="1">
    <location>
        <begin position="41"/>
        <end position="44"/>
    </location>
</feature>
<feature type="disulfide bond" description="Redox-active" evidence="1">
    <location>
        <begin position="105"/>
        <end position="131"/>
    </location>
</feature>
<name>DSBB_AERHH</name>
<accession>A0KL09</accession>
<reference key="1">
    <citation type="journal article" date="2006" name="J. Bacteriol.">
        <title>Genome sequence of Aeromonas hydrophila ATCC 7966T: jack of all trades.</title>
        <authorList>
            <person name="Seshadri R."/>
            <person name="Joseph S.W."/>
            <person name="Chopra A.K."/>
            <person name="Sha J."/>
            <person name="Shaw J."/>
            <person name="Graf J."/>
            <person name="Haft D.H."/>
            <person name="Wu M."/>
            <person name="Ren Q."/>
            <person name="Rosovitz M.J."/>
            <person name="Madupu R."/>
            <person name="Tallon L."/>
            <person name="Kim M."/>
            <person name="Jin S."/>
            <person name="Vuong H."/>
            <person name="Stine O.C."/>
            <person name="Ali A."/>
            <person name="Horneman A.J."/>
            <person name="Heidelberg J.F."/>
        </authorList>
    </citation>
    <scope>NUCLEOTIDE SEQUENCE [LARGE SCALE GENOMIC DNA]</scope>
    <source>
        <strain>ATCC 7966 / DSM 30187 / BCRC 13018 / CCUG 14551 / JCM 1027 / KCTC 2358 / NCIMB 9240 / NCTC 8049</strain>
    </source>
</reference>
<comment type="function">
    <text evidence="1">Required for disulfide bond formation in some periplasmic proteins. Acts by oxidizing the DsbA protein.</text>
</comment>
<comment type="subcellular location">
    <subcellularLocation>
        <location evidence="1">Cell inner membrane</location>
        <topology evidence="1">Multi-pass membrane protein</topology>
    </subcellularLocation>
</comment>
<comment type="similarity">
    <text evidence="1">Belongs to the DsbB family.</text>
</comment>
<gene>
    <name evidence="1" type="primary">dsbB</name>
    <name type="ordered locus">AHA_2445</name>
</gene>
<protein>
    <recommendedName>
        <fullName evidence="1">Disulfide bond formation protein B</fullName>
    </recommendedName>
    <alternativeName>
        <fullName evidence="1">Disulfide oxidoreductase</fullName>
    </alternativeName>
</protein>
<evidence type="ECO:0000255" key="1">
    <source>
        <dbReference type="HAMAP-Rule" id="MF_00286"/>
    </source>
</evidence>
<dbReference type="EMBL" id="CP000462">
    <property type="protein sequence ID" value="ABK37135.1"/>
    <property type="molecule type" value="Genomic_DNA"/>
</dbReference>
<dbReference type="RefSeq" id="WP_011706278.1">
    <property type="nucleotide sequence ID" value="NC_008570.1"/>
</dbReference>
<dbReference type="RefSeq" id="YP_856960.1">
    <property type="nucleotide sequence ID" value="NC_008570.1"/>
</dbReference>
<dbReference type="SMR" id="A0KL09"/>
<dbReference type="STRING" id="380703.AHA_2445"/>
<dbReference type="EnsemblBacteria" id="ABK37135">
    <property type="protein sequence ID" value="ABK37135"/>
    <property type="gene ID" value="AHA_2445"/>
</dbReference>
<dbReference type="GeneID" id="4489311"/>
<dbReference type="KEGG" id="aha:AHA_2445"/>
<dbReference type="PATRIC" id="fig|380703.7.peg.2444"/>
<dbReference type="eggNOG" id="COG1495">
    <property type="taxonomic scope" value="Bacteria"/>
</dbReference>
<dbReference type="HOGENOM" id="CLU_098660_2_0_6"/>
<dbReference type="OrthoDB" id="3711263at2"/>
<dbReference type="Proteomes" id="UP000000756">
    <property type="component" value="Chromosome"/>
</dbReference>
<dbReference type="GO" id="GO:0005886">
    <property type="term" value="C:plasma membrane"/>
    <property type="evidence" value="ECO:0007669"/>
    <property type="project" value="UniProtKB-SubCell"/>
</dbReference>
<dbReference type="GO" id="GO:0009055">
    <property type="term" value="F:electron transfer activity"/>
    <property type="evidence" value="ECO:0007669"/>
    <property type="project" value="UniProtKB-UniRule"/>
</dbReference>
<dbReference type="GO" id="GO:0015035">
    <property type="term" value="F:protein-disulfide reductase activity"/>
    <property type="evidence" value="ECO:0007669"/>
    <property type="project" value="UniProtKB-UniRule"/>
</dbReference>
<dbReference type="GO" id="GO:0006457">
    <property type="term" value="P:protein folding"/>
    <property type="evidence" value="ECO:0007669"/>
    <property type="project" value="InterPro"/>
</dbReference>
<dbReference type="Gene3D" id="1.20.1550.10">
    <property type="entry name" value="DsbB-like"/>
    <property type="match status" value="1"/>
</dbReference>
<dbReference type="HAMAP" id="MF_00286">
    <property type="entry name" value="DsbB"/>
    <property type="match status" value="1"/>
</dbReference>
<dbReference type="InterPro" id="IPR003752">
    <property type="entry name" value="DiS_bond_form_DsbB/BdbC"/>
</dbReference>
<dbReference type="InterPro" id="IPR022920">
    <property type="entry name" value="Disulphide_bond_form_DsbB"/>
</dbReference>
<dbReference type="InterPro" id="IPR050183">
    <property type="entry name" value="DsbB"/>
</dbReference>
<dbReference type="InterPro" id="IPR023380">
    <property type="entry name" value="DsbB-like_sf"/>
</dbReference>
<dbReference type="NCBIfam" id="NF002485">
    <property type="entry name" value="PRK01749.1"/>
    <property type="match status" value="1"/>
</dbReference>
<dbReference type="PANTHER" id="PTHR36570">
    <property type="entry name" value="DISULFIDE BOND FORMATION PROTEIN B"/>
    <property type="match status" value="1"/>
</dbReference>
<dbReference type="PANTHER" id="PTHR36570:SF2">
    <property type="entry name" value="DISULFIDE BOND FORMATION PROTEIN B"/>
    <property type="match status" value="1"/>
</dbReference>
<dbReference type="Pfam" id="PF02600">
    <property type="entry name" value="DsbB"/>
    <property type="match status" value="1"/>
</dbReference>
<dbReference type="SUPFAM" id="SSF158442">
    <property type="entry name" value="DsbB-like"/>
    <property type="match status" value="1"/>
</dbReference>
<organism>
    <name type="scientific">Aeromonas hydrophila subsp. hydrophila (strain ATCC 7966 / DSM 30187 / BCRC 13018 / CCUG 14551 / JCM 1027 / KCTC 2358 / NCIMB 9240 / NCTC 8049)</name>
    <dbReference type="NCBI Taxonomy" id="380703"/>
    <lineage>
        <taxon>Bacteria</taxon>
        <taxon>Pseudomonadati</taxon>
        <taxon>Pseudomonadota</taxon>
        <taxon>Gammaproteobacteria</taxon>
        <taxon>Aeromonadales</taxon>
        <taxon>Aeromonadaceae</taxon>
        <taxon>Aeromonas</taxon>
    </lineage>
</organism>
<proteinExistence type="inferred from homology"/>
<sequence length="173" mass="19621">MIEFLRRIAAHRLAWSLLAASALFLELSALFFQHVLGLHPCVMCVYERIATLGVLTAGLLGMVAPQKWYVRWSALLLWGSSAFWGLKLALKHVDYQVNPSPFNVCEGFVDFPSWAPLDQWIPWMFYPDGDCSEVTWQFLSFSMPQWLVAIFAVYLLVFVVVAIGNLVKGRCCS</sequence>
<keyword id="KW-0997">Cell inner membrane</keyword>
<keyword id="KW-1003">Cell membrane</keyword>
<keyword id="KW-0143">Chaperone</keyword>
<keyword id="KW-1015">Disulfide bond</keyword>
<keyword id="KW-0249">Electron transport</keyword>
<keyword id="KW-0472">Membrane</keyword>
<keyword id="KW-0560">Oxidoreductase</keyword>
<keyword id="KW-0676">Redox-active center</keyword>
<keyword id="KW-1185">Reference proteome</keyword>
<keyword id="KW-0812">Transmembrane</keyword>
<keyword id="KW-1133">Transmembrane helix</keyword>
<keyword id="KW-0813">Transport</keyword>